<evidence type="ECO:0000305" key="1"/>
<organism>
    <name type="scientific">Acanthamoeba polyphaga mimivirus</name>
    <name type="common">APMV</name>
    <dbReference type="NCBI Taxonomy" id="212035"/>
    <lineage>
        <taxon>Viruses</taxon>
        <taxon>Varidnaviria</taxon>
        <taxon>Bamfordvirae</taxon>
        <taxon>Nucleocytoviricota</taxon>
        <taxon>Megaviricetes</taxon>
        <taxon>Imitervirales</taxon>
        <taxon>Mimiviridae</taxon>
        <taxon>Megamimivirinae</taxon>
        <taxon>Mimivirus</taxon>
        <taxon>Mimivirus bradfordmassiliense</taxon>
    </lineage>
</organism>
<name>CAPS4_MIMIV</name>
<protein>
    <recommendedName>
        <fullName>Probable capsid protein 4</fullName>
    </recommendedName>
</protein>
<proteinExistence type="inferred from homology"/>
<sequence>MAGGIIQLVAYGIQDLYLTGDPQITFFKVVYRRHTNFSVESIIQNFTSVPDFGSTVSCTLSKSGDMINKIYVYIELPSVNVFYDESGNLDKFKKFAWVRNIGYALIKDVSIEIGGKLIDKQYGEWMYIWSQVTNKSDEGLDKMIGNIPLLYDFSNGKPKYSLYVPLEFWFCRNSGLSLPLVALSSSEVKITISFRSAEECYRIGPTHSIEIMEDIVPFEFGDYIEQKIGQKTIHGLYMGYDYMTKKLYYIKIHSPTAIKKSFESQQLRNSTSQRENYRIYNSLTGSYCTPKPDHSEMSEPTELSQKLHFINAYLYVDYVYLDNDERMMLIKNPQEYLIEQIQYNQEINVKNSNVKQKLTLNHPCKAHYWVVQSDSLVGPGTINDVFNFTTSHIRNHDGRTIGENPVTKSKLMLNSRERFKQRDGKYFNIVQPYQHHYRGPDTGINMYSVSINSQCHQPSSTINMSRIDDISMEMQLKNVNPNNTHKIRSYTTSYNILRVCFNIGGLAFESMD</sequence>
<organismHost>
    <name type="scientific">Acanthamoeba polyphaga</name>
    <name type="common">Amoeba</name>
    <dbReference type="NCBI Taxonomy" id="5757"/>
</organismHost>
<feature type="chain" id="PRO_0000071171" description="Probable capsid protein 4">
    <location>
        <begin position="1"/>
        <end position="512"/>
    </location>
</feature>
<comment type="subcellular location">
    <subcellularLocation>
        <location evidence="1">Virion</location>
    </subcellularLocation>
</comment>
<comment type="similarity">
    <text evidence="1">Belongs to the NCLDV major capsid protein family.</text>
</comment>
<accession>Q7T6Y5</accession>
<keyword id="KW-0167">Capsid protein</keyword>
<keyword id="KW-1185">Reference proteome</keyword>
<keyword id="KW-0946">Virion</keyword>
<dbReference type="EMBL" id="AY653733">
    <property type="protein sequence ID" value="AAQ09575.2"/>
    <property type="molecule type" value="Genomic_DNA"/>
</dbReference>
<dbReference type="SMR" id="Q7T6Y5"/>
<dbReference type="KEGG" id="vg:9925065"/>
<dbReference type="OrthoDB" id="5765at10239"/>
<dbReference type="Proteomes" id="UP000001134">
    <property type="component" value="Genome"/>
</dbReference>
<dbReference type="GO" id="GO:0019028">
    <property type="term" value="C:viral capsid"/>
    <property type="evidence" value="ECO:0007669"/>
    <property type="project" value="UniProtKB-KW"/>
</dbReference>
<dbReference type="GO" id="GO:0005198">
    <property type="term" value="F:structural molecule activity"/>
    <property type="evidence" value="ECO:0007669"/>
    <property type="project" value="InterPro"/>
</dbReference>
<dbReference type="Gene3D" id="2.70.9.10">
    <property type="entry name" value="Adenovirus Type 2 Hexon, domain 4"/>
    <property type="match status" value="1"/>
</dbReference>
<dbReference type="Gene3D" id="2.70.9.20">
    <property type="entry name" value="Major capsid protein Vp54"/>
    <property type="match status" value="1"/>
</dbReference>
<dbReference type="InterPro" id="IPR031654">
    <property type="entry name" value="Capsid_N"/>
</dbReference>
<dbReference type="InterPro" id="IPR007542">
    <property type="entry name" value="MCP_C"/>
</dbReference>
<dbReference type="InterPro" id="IPR038519">
    <property type="entry name" value="MCP_C_sf"/>
</dbReference>
<dbReference type="InterPro" id="IPR016112">
    <property type="entry name" value="VP_dsDNA_II"/>
</dbReference>
<dbReference type="Pfam" id="PF16903">
    <property type="entry name" value="Capsid_N"/>
    <property type="match status" value="1"/>
</dbReference>
<dbReference type="Pfam" id="PF04451">
    <property type="entry name" value="Capsid_NCLDV"/>
    <property type="match status" value="1"/>
</dbReference>
<dbReference type="SUPFAM" id="SSF49749">
    <property type="entry name" value="Group II dsDNA viruses VP"/>
    <property type="match status" value="2"/>
</dbReference>
<gene>
    <name type="ordered locus">MIMI_R441</name>
</gene>
<reference key="1">
    <citation type="journal article" date="2004" name="Science">
        <title>The 1.2-megabase genome sequence of Mimivirus.</title>
        <authorList>
            <person name="Raoult D."/>
            <person name="Audic S."/>
            <person name="Robert C."/>
            <person name="Abergel C."/>
            <person name="Renesto P."/>
            <person name="Ogata H."/>
            <person name="La Scola B."/>
            <person name="Susan M."/>
            <person name="Claverie J.-M."/>
        </authorList>
    </citation>
    <scope>NUCLEOTIDE SEQUENCE [LARGE SCALE GENOMIC DNA]</scope>
    <source>
        <strain>Rowbotham-Bradford</strain>
    </source>
</reference>